<organism>
    <name type="scientific">Borrelia duttonii (strain Ly)</name>
    <dbReference type="NCBI Taxonomy" id="412419"/>
    <lineage>
        <taxon>Bacteria</taxon>
        <taxon>Pseudomonadati</taxon>
        <taxon>Spirochaetota</taxon>
        <taxon>Spirochaetia</taxon>
        <taxon>Spirochaetales</taxon>
        <taxon>Borreliaceae</taxon>
        <taxon>Borrelia</taxon>
    </lineage>
</organism>
<proteinExistence type="inferred from homology"/>
<gene>
    <name evidence="1" type="primary">obg</name>
    <name type="ordered locus">BDU_786</name>
</gene>
<keyword id="KW-0963">Cytoplasm</keyword>
<keyword id="KW-0342">GTP-binding</keyword>
<keyword id="KW-0378">Hydrolase</keyword>
<keyword id="KW-0460">Magnesium</keyword>
<keyword id="KW-0479">Metal-binding</keyword>
<keyword id="KW-0547">Nucleotide-binding</keyword>
<name>OBG_BORDL</name>
<evidence type="ECO:0000255" key="1">
    <source>
        <dbReference type="HAMAP-Rule" id="MF_01454"/>
    </source>
</evidence>
<evidence type="ECO:0000255" key="2">
    <source>
        <dbReference type="PROSITE-ProRule" id="PRU01231"/>
    </source>
</evidence>
<feature type="chain" id="PRO_0000385756" description="GTPase Obg">
    <location>
        <begin position="1"/>
        <end position="327"/>
    </location>
</feature>
<feature type="domain" description="Obg" evidence="2">
    <location>
        <begin position="2"/>
        <end position="160"/>
    </location>
</feature>
<feature type="domain" description="OBG-type G" evidence="1">
    <location>
        <begin position="161"/>
        <end position="326"/>
    </location>
</feature>
<feature type="binding site" evidence="1">
    <location>
        <begin position="167"/>
        <end position="174"/>
    </location>
    <ligand>
        <name>GTP</name>
        <dbReference type="ChEBI" id="CHEBI:37565"/>
    </ligand>
</feature>
<feature type="binding site" evidence="1">
    <location>
        <position position="174"/>
    </location>
    <ligand>
        <name>Mg(2+)</name>
        <dbReference type="ChEBI" id="CHEBI:18420"/>
    </ligand>
</feature>
<feature type="binding site" evidence="1">
    <location>
        <begin position="192"/>
        <end position="196"/>
    </location>
    <ligand>
        <name>GTP</name>
        <dbReference type="ChEBI" id="CHEBI:37565"/>
    </ligand>
</feature>
<feature type="binding site" evidence="1">
    <location>
        <position position="194"/>
    </location>
    <ligand>
        <name>Mg(2+)</name>
        <dbReference type="ChEBI" id="CHEBI:18420"/>
    </ligand>
</feature>
<feature type="binding site" evidence="1">
    <location>
        <begin position="213"/>
        <end position="216"/>
    </location>
    <ligand>
        <name>GTP</name>
        <dbReference type="ChEBI" id="CHEBI:37565"/>
    </ligand>
</feature>
<feature type="binding site" evidence="1">
    <location>
        <begin position="280"/>
        <end position="283"/>
    </location>
    <ligand>
        <name>GTP</name>
        <dbReference type="ChEBI" id="CHEBI:37565"/>
    </ligand>
</feature>
<feature type="binding site" evidence="1">
    <location>
        <begin position="307"/>
        <end position="309"/>
    </location>
    <ligand>
        <name>GTP</name>
        <dbReference type="ChEBI" id="CHEBI:37565"/>
    </ligand>
</feature>
<reference key="1">
    <citation type="journal article" date="2008" name="PLoS Genet.">
        <title>The genome of Borrelia recurrentis, the agent of deadly louse-borne relapsing fever, is a degraded subset of tick-borne Borrelia duttonii.</title>
        <authorList>
            <person name="Lescot M."/>
            <person name="Audic S."/>
            <person name="Robert C."/>
            <person name="Nguyen T.T."/>
            <person name="Blanc G."/>
            <person name="Cutler S.J."/>
            <person name="Wincker P."/>
            <person name="Couloux A."/>
            <person name="Claverie J.-M."/>
            <person name="Raoult D."/>
            <person name="Drancourt M."/>
        </authorList>
    </citation>
    <scope>NUCLEOTIDE SEQUENCE [LARGE SCALE GENOMIC DNA]</scope>
    <source>
        <strain>Ly</strain>
    </source>
</reference>
<protein>
    <recommendedName>
        <fullName evidence="1">GTPase Obg</fullName>
        <ecNumber evidence="1">3.6.5.-</ecNumber>
    </recommendedName>
    <alternativeName>
        <fullName evidence="1">GTP-binding protein Obg</fullName>
    </alternativeName>
</protein>
<dbReference type="EC" id="3.6.5.-" evidence="1"/>
<dbReference type="EMBL" id="CP000976">
    <property type="protein sequence ID" value="ACH93709.1"/>
    <property type="molecule type" value="Genomic_DNA"/>
</dbReference>
<dbReference type="RefSeq" id="WP_012538518.1">
    <property type="nucleotide sequence ID" value="NC_011229.1"/>
</dbReference>
<dbReference type="SMR" id="B5RMX3"/>
<dbReference type="STRING" id="412419.BDU_786"/>
<dbReference type="KEGG" id="bdu:BDU_786"/>
<dbReference type="eggNOG" id="COG0536">
    <property type="taxonomic scope" value="Bacteria"/>
</dbReference>
<dbReference type="HOGENOM" id="CLU_011747_2_0_12"/>
<dbReference type="OrthoDB" id="9807318at2"/>
<dbReference type="Proteomes" id="UP000000611">
    <property type="component" value="Chromosome"/>
</dbReference>
<dbReference type="GO" id="GO:0005737">
    <property type="term" value="C:cytoplasm"/>
    <property type="evidence" value="ECO:0007669"/>
    <property type="project" value="UniProtKB-SubCell"/>
</dbReference>
<dbReference type="GO" id="GO:0005525">
    <property type="term" value="F:GTP binding"/>
    <property type="evidence" value="ECO:0007669"/>
    <property type="project" value="UniProtKB-UniRule"/>
</dbReference>
<dbReference type="GO" id="GO:0003924">
    <property type="term" value="F:GTPase activity"/>
    <property type="evidence" value="ECO:0007669"/>
    <property type="project" value="UniProtKB-UniRule"/>
</dbReference>
<dbReference type="GO" id="GO:0000287">
    <property type="term" value="F:magnesium ion binding"/>
    <property type="evidence" value="ECO:0007669"/>
    <property type="project" value="InterPro"/>
</dbReference>
<dbReference type="GO" id="GO:0042254">
    <property type="term" value="P:ribosome biogenesis"/>
    <property type="evidence" value="ECO:0007669"/>
    <property type="project" value="UniProtKB-UniRule"/>
</dbReference>
<dbReference type="CDD" id="cd01898">
    <property type="entry name" value="Obg"/>
    <property type="match status" value="1"/>
</dbReference>
<dbReference type="FunFam" id="2.70.210.12:FF:000001">
    <property type="entry name" value="GTPase Obg"/>
    <property type="match status" value="1"/>
</dbReference>
<dbReference type="Gene3D" id="2.70.210.12">
    <property type="entry name" value="GTP1/OBG domain"/>
    <property type="match status" value="1"/>
</dbReference>
<dbReference type="Gene3D" id="3.40.50.300">
    <property type="entry name" value="P-loop containing nucleotide triphosphate hydrolases"/>
    <property type="match status" value="1"/>
</dbReference>
<dbReference type="HAMAP" id="MF_01454">
    <property type="entry name" value="GTPase_Obg"/>
    <property type="match status" value="1"/>
</dbReference>
<dbReference type="InterPro" id="IPR031167">
    <property type="entry name" value="G_OBG"/>
</dbReference>
<dbReference type="InterPro" id="IPR006073">
    <property type="entry name" value="GTP-bd"/>
</dbReference>
<dbReference type="InterPro" id="IPR014100">
    <property type="entry name" value="GTP-bd_Obg/CgtA"/>
</dbReference>
<dbReference type="InterPro" id="IPR006074">
    <property type="entry name" value="GTP1-OBG_CS"/>
</dbReference>
<dbReference type="InterPro" id="IPR006169">
    <property type="entry name" value="GTP1_OBG_dom"/>
</dbReference>
<dbReference type="InterPro" id="IPR036726">
    <property type="entry name" value="GTP1_OBG_dom_sf"/>
</dbReference>
<dbReference type="InterPro" id="IPR045086">
    <property type="entry name" value="OBG_GTPase"/>
</dbReference>
<dbReference type="InterPro" id="IPR027417">
    <property type="entry name" value="P-loop_NTPase"/>
</dbReference>
<dbReference type="NCBIfam" id="TIGR02729">
    <property type="entry name" value="Obg_CgtA"/>
    <property type="match status" value="1"/>
</dbReference>
<dbReference type="NCBIfam" id="NF008956">
    <property type="entry name" value="PRK12299.1"/>
    <property type="match status" value="1"/>
</dbReference>
<dbReference type="PANTHER" id="PTHR11702">
    <property type="entry name" value="DEVELOPMENTALLY REGULATED GTP-BINDING PROTEIN-RELATED"/>
    <property type="match status" value="1"/>
</dbReference>
<dbReference type="PANTHER" id="PTHR11702:SF31">
    <property type="entry name" value="MITOCHONDRIAL RIBOSOME-ASSOCIATED GTPASE 2"/>
    <property type="match status" value="1"/>
</dbReference>
<dbReference type="Pfam" id="PF01018">
    <property type="entry name" value="GTP1_OBG"/>
    <property type="match status" value="1"/>
</dbReference>
<dbReference type="Pfam" id="PF01926">
    <property type="entry name" value="MMR_HSR1"/>
    <property type="match status" value="1"/>
</dbReference>
<dbReference type="PIRSF" id="PIRSF002401">
    <property type="entry name" value="GTP_bd_Obg/CgtA"/>
    <property type="match status" value="1"/>
</dbReference>
<dbReference type="PRINTS" id="PR00326">
    <property type="entry name" value="GTP1OBG"/>
</dbReference>
<dbReference type="SUPFAM" id="SSF82051">
    <property type="entry name" value="Obg GTP-binding protein N-terminal domain"/>
    <property type="match status" value="1"/>
</dbReference>
<dbReference type="SUPFAM" id="SSF52540">
    <property type="entry name" value="P-loop containing nucleoside triphosphate hydrolases"/>
    <property type="match status" value="1"/>
</dbReference>
<dbReference type="PROSITE" id="PS51710">
    <property type="entry name" value="G_OBG"/>
    <property type="match status" value="1"/>
</dbReference>
<dbReference type="PROSITE" id="PS00905">
    <property type="entry name" value="GTP1_OBG"/>
    <property type="match status" value="1"/>
</dbReference>
<dbReference type="PROSITE" id="PS51883">
    <property type="entry name" value="OBG"/>
    <property type="match status" value="1"/>
</dbReference>
<accession>B5RMX3</accession>
<comment type="function">
    <text evidence="1">An essential GTPase which binds GTP, GDP and possibly (p)ppGpp with moderate affinity, with high nucleotide exchange rates and a fairly low GTP hydrolysis rate. Plays a role in control of the cell cycle, stress response, ribosome biogenesis and in those bacteria that undergo differentiation, in morphogenesis control.</text>
</comment>
<comment type="cofactor">
    <cofactor evidence="1">
        <name>Mg(2+)</name>
        <dbReference type="ChEBI" id="CHEBI:18420"/>
    </cofactor>
</comment>
<comment type="subunit">
    <text evidence="1">Monomer.</text>
</comment>
<comment type="subcellular location">
    <subcellularLocation>
        <location evidence="1">Cytoplasm</location>
    </subcellularLocation>
</comment>
<comment type="similarity">
    <text evidence="1">Belongs to the TRAFAC class OBG-HflX-like GTPase superfamily. OBG GTPase family.</text>
</comment>
<sequence>MHLFKDSLNLIVSSGNGGAGCVSFLREKFKAKGGPDGGDGGRGGDVIFKVKSNLKTLSLYRNGQKLSASNGKSGMGLKKSGAAGSDLIIFVPPNTSIYDADSNCMLFELKNFDDEVVVLKGGRGGLGNVNFKSSTKRTPRFAQPGESGLTLNLRLELSLIADIGLVGLPNAGKSSLISKITASRSRVANYPFTTKIPHFGVVRVSYNDLIIADLPGIIEGASKGIGLGFEFLRHISKTQILVFLIDVSSDDFMSAYDILINELRVYDIGLLKKKRIIVASKLDLEGATENFNQLKSILSEERVLGISIYDNIGINELVSEFFSLVKI</sequence>